<accession>Q00736</accession>
<gene>
    <name type="primary">traY</name>
</gene>
<dbReference type="EMBL" id="M62986">
    <property type="protein sequence ID" value="AAA25524.1"/>
    <property type="molecule type" value="Genomic_DNA"/>
</dbReference>
<dbReference type="PIR" id="D37390">
    <property type="entry name" value="D37390"/>
</dbReference>
<dbReference type="RefSeq" id="WP_071782156.1">
    <property type="nucleotide sequence ID" value="NZ_QZWA01000502.1"/>
</dbReference>
<dbReference type="SMR" id="Q00736"/>
<dbReference type="GO" id="GO:0005737">
    <property type="term" value="C:cytoplasm"/>
    <property type="evidence" value="ECO:0007669"/>
    <property type="project" value="UniProtKB-SubCell"/>
</dbReference>
<dbReference type="GO" id="GO:0003677">
    <property type="term" value="F:DNA binding"/>
    <property type="evidence" value="ECO:0007669"/>
    <property type="project" value="UniProtKB-KW"/>
</dbReference>
<dbReference type="InterPro" id="IPR008876">
    <property type="entry name" value="TraY"/>
</dbReference>
<dbReference type="NCBIfam" id="NF010300">
    <property type="entry name" value="PRK13740.1-1"/>
    <property type="match status" value="1"/>
</dbReference>
<dbReference type="Pfam" id="PF05509">
    <property type="entry name" value="TraY"/>
    <property type="match status" value="1"/>
</dbReference>
<geneLocation type="plasmid">
    <name>IncFI P307</name>
</geneLocation>
<comment type="function">
    <text evidence="1">Conjugative DNA transfer (CDT) is the unidirectional transfer of ssDNA plasmid from a donor to a recipient cell. It is the central mechanism by which antibiotic resistance and virulence factors are propagated in bacterial populations. Part of the relaxosome, which facilitates a site- and strand-specific cut in the origin of transfer by TraI, at the nic site. Relaxosome formation requires binding of IHF and TraY to the oriT region, which then facilitates binding of TraI. Also positively regulates tra gene expression (By similarity).</text>
</comment>
<comment type="subunit">
    <text evidence="1">Part of the relaxosome, a complex composed of plasmid encoded TraI, TraM, TraY and host-encoded IHF bound to the F plasmid origin of transfer (oriT). Interacts with TraM, probably through its C-terminus (By similarity).</text>
</comment>
<comment type="subcellular location">
    <subcellularLocation>
        <location evidence="1">Cytoplasm</location>
    </subcellularLocation>
</comment>
<comment type="similarity">
    <text evidence="2">Belongs to the TraY family.</text>
</comment>
<sequence length="71" mass="8103">MSRGRTRAAPGNKVLLILDETTNQKLLAARDRSGRTKTNEVFIRLKDHLNRFPDFYNSSLVKEEAEGIDDI</sequence>
<proteinExistence type="inferred from homology"/>
<feature type="chain" id="PRO_0000068484" description="Relaxosome protein TraY">
    <location>
        <begin position="1"/>
        <end position="71"/>
    </location>
</feature>
<protein>
    <recommendedName>
        <fullName>Relaxosome protein TraY</fullName>
    </recommendedName>
</protein>
<name>TRAY5_ECOLX</name>
<keyword id="KW-0010">Activator</keyword>
<keyword id="KW-0184">Conjugation</keyword>
<keyword id="KW-0963">Cytoplasm</keyword>
<keyword id="KW-0238">DNA-binding</keyword>
<keyword id="KW-0614">Plasmid</keyword>
<keyword id="KW-0804">Transcription</keyword>
<keyword id="KW-0805">Transcription regulation</keyword>
<organism>
    <name type="scientific">Escherichia coli</name>
    <dbReference type="NCBI Taxonomy" id="562"/>
    <lineage>
        <taxon>Bacteria</taxon>
        <taxon>Pseudomonadati</taxon>
        <taxon>Pseudomonadota</taxon>
        <taxon>Gammaproteobacteria</taxon>
        <taxon>Enterobacterales</taxon>
        <taxon>Enterobacteriaceae</taxon>
        <taxon>Escherichia</taxon>
    </lineage>
</organism>
<reference key="1">
    <citation type="journal article" date="1990" name="Plasmid">
        <title>The sequences of genes bordering oriT in the enterotoxin plasmid P307: comparison with the sequences of plasmids F and R1.</title>
        <authorList>
            <person name="Graus-Goeldner A."/>
            <person name="Graus H."/>
            <person name="Schlacher T."/>
            <person name="Hoegenauer G."/>
        </authorList>
    </citation>
    <scope>NUCLEOTIDE SEQUENCE [GENOMIC DNA]</scope>
    <source>
        <strain>711</strain>
    </source>
</reference>
<evidence type="ECO:0000250" key="1"/>
<evidence type="ECO:0000305" key="2"/>